<gene>
    <name evidence="1" type="primary">plsY</name>
    <name type="synonym">ygiH</name>
    <name type="ordered locus">SDY_3242</name>
</gene>
<comment type="function">
    <text evidence="1">Catalyzes the transfer of an acyl group from acyl-ACP to glycerol-3-phosphate (G3P) to form lysophosphatidic acid (LPA). This enzyme can also utilize acyl-CoA as fatty acyl donor, but not acyl-PO(4).</text>
</comment>
<comment type="catalytic activity">
    <reaction evidence="1">
        <text>sn-glycerol 3-phosphate + an acyl-CoA = a 1-acyl-sn-glycero-3-phosphate + CoA</text>
        <dbReference type="Rhea" id="RHEA:15325"/>
        <dbReference type="ChEBI" id="CHEBI:57287"/>
        <dbReference type="ChEBI" id="CHEBI:57597"/>
        <dbReference type="ChEBI" id="CHEBI:57970"/>
        <dbReference type="ChEBI" id="CHEBI:58342"/>
        <dbReference type="EC" id="2.3.1.15"/>
    </reaction>
</comment>
<comment type="catalytic activity">
    <reaction evidence="1">
        <text>a fatty acyl-[ACP] + sn-glycerol 3-phosphate = a 1-acyl-sn-glycero-3-phosphate + holo-[ACP]</text>
        <dbReference type="Rhea" id="RHEA:42300"/>
        <dbReference type="Rhea" id="RHEA-COMP:9685"/>
        <dbReference type="Rhea" id="RHEA-COMP:14125"/>
        <dbReference type="ChEBI" id="CHEBI:57597"/>
        <dbReference type="ChEBI" id="CHEBI:57970"/>
        <dbReference type="ChEBI" id="CHEBI:64479"/>
        <dbReference type="ChEBI" id="CHEBI:138651"/>
        <dbReference type="EC" id="2.3.1.n5"/>
    </reaction>
</comment>
<comment type="pathway">
    <text evidence="1">Lipid metabolism; phospholipid metabolism.</text>
</comment>
<comment type="subunit">
    <text evidence="1">Probably interacts with PlsX.</text>
</comment>
<comment type="subcellular location">
    <subcellularLocation>
        <location evidence="1">Cell inner membrane</location>
        <topology evidence="1">Multi-pass membrane protein</topology>
    </subcellularLocation>
</comment>
<comment type="similarity">
    <text evidence="1">Belongs to the PlsY family.</text>
</comment>
<protein>
    <recommendedName>
        <fullName evidence="1">Glycerol-3-phosphate acyltransferase</fullName>
    </recommendedName>
    <alternativeName>
        <fullName evidence="1">G3P acyltransferase</fullName>
        <shortName evidence="1">GPAT</shortName>
        <ecNumber evidence="1">2.3.1.15</ecNumber>
        <ecNumber evidence="1">2.3.1.n5</ecNumber>
    </alternativeName>
    <alternativeName>
        <fullName evidence="1">Lysophosphatidic acid synthase</fullName>
        <shortName evidence="1">LPA synthase</shortName>
    </alternativeName>
</protein>
<accession>Q32BQ6</accession>
<reference key="1">
    <citation type="journal article" date="2005" name="Nucleic Acids Res.">
        <title>Genome dynamics and diversity of Shigella species, the etiologic agents of bacillary dysentery.</title>
        <authorList>
            <person name="Yang F."/>
            <person name="Yang J."/>
            <person name="Zhang X."/>
            <person name="Chen L."/>
            <person name="Jiang Y."/>
            <person name="Yan Y."/>
            <person name="Tang X."/>
            <person name="Wang J."/>
            <person name="Xiong Z."/>
            <person name="Dong J."/>
            <person name="Xue Y."/>
            <person name="Zhu Y."/>
            <person name="Xu X."/>
            <person name="Sun L."/>
            <person name="Chen S."/>
            <person name="Nie H."/>
            <person name="Peng J."/>
            <person name="Xu J."/>
            <person name="Wang Y."/>
            <person name="Yuan Z."/>
            <person name="Wen Y."/>
            <person name="Yao Z."/>
            <person name="Shen Y."/>
            <person name="Qiang B."/>
            <person name="Hou Y."/>
            <person name="Yu J."/>
            <person name="Jin Q."/>
        </authorList>
    </citation>
    <scope>NUCLEOTIDE SEQUENCE [LARGE SCALE GENOMIC DNA]</scope>
    <source>
        <strain>Sd197</strain>
    </source>
</reference>
<proteinExistence type="inferred from homology"/>
<evidence type="ECO:0000255" key="1">
    <source>
        <dbReference type="HAMAP-Rule" id="MF_01043"/>
    </source>
</evidence>
<feature type="chain" id="PRO_0000188445" description="Glycerol-3-phosphate acyltransferase">
    <location>
        <begin position="1"/>
        <end position="205"/>
    </location>
</feature>
<feature type="topological domain" description="Periplasmic" evidence="1">
    <location>
        <begin position="1"/>
        <end position="3"/>
    </location>
</feature>
<feature type="transmembrane region" description="Helical" evidence="1">
    <location>
        <begin position="4"/>
        <end position="24"/>
    </location>
</feature>
<feature type="topological domain" description="Cytoplasmic" evidence="1">
    <location>
        <begin position="25"/>
        <end position="52"/>
    </location>
</feature>
<feature type="transmembrane region" description="Helical" evidence="1">
    <location>
        <begin position="53"/>
        <end position="73"/>
    </location>
</feature>
<feature type="topological domain" description="Periplasmic" evidence="1">
    <location>
        <begin position="74"/>
        <end position="80"/>
    </location>
</feature>
<feature type="transmembrane region" description="Helical" evidence="1">
    <location>
        <begin position="81"/>
        <end position="101"/>
    </location>
</feature>
<feature type="topological domain" description="Cytoplasmic" evidence="1">
    <location>
        <begin position="102"/>
        <end position="111"/>
    </location>
</feature>
<feature type="transmembrane region" description="Helical" evidence="1">
    <location>
        <begin position="112"/>
        <end position="132"/>
    </location>
</feature>
<feature type="topological domain" description="Periplasmic" evidence="1">
    <location>
        <begin position="133"/>
        <end position="137"/>
    </location>
</feature>
<feature type="transmembrane region" description="Helical" evidence="1">
    <location>
        <begin position="138"/>
        <end position="158"/>
    </location>
</feature>
<feature type="topological domain" description="Cytoplasmic" evidence="1">
    <location>
        <begin position="159"/>
        <end position="205"/>
    </location>
</feature>
<name>PLSY_SHIDS</name>
<keyword id="KW-0997">Cell inner membrane</keyword>
<keyword id="KW-1003">Cell membrane</keyword>
<keyword id="KW-0444">Lipid biosynthesis</keyword>
<keyword id="KW-0443">Lipid metabolism</keyword>
<keyword id="KW-0472">Membrane</keyword>
<keyword id="KW-0594">Phospholipid biosynthesis</keyword>
<keyword id="KW-1208">Phospholipid metabolism</keyword>
<keyword id="KW-1185">Reference proteome</keyword>
<keyword id="KW-0808">Transferase</keyword>
<keyword id="KW-0812">Transmembrane</keyword>
<keyword id="KW-1133">Transmembrane helix</keyword>
<dbReference type="EC" id="2.3.1.15" evidence="1"/>
<dbReference type="EC" id="2.3.1.n5" evidence="1"/>
<dbReference type="EMBL" id="CP000034">
    <property type="protein sequence ID" value="ABB63249.1"/>
    <property type="molecule type" value="Genomic_DNA"/>
</dbReference>
<dbReference type="RefSeq" id="WP_001272796.1">
    <property type="nucleotide sequence ID" value="NC_007606.1"/>
</dbReference>
<dbReference type="RefSeq" id="YP_404740.1">
    <property type="nucleotide sequence ID" value="NC_007606.1"/>
</dbReference>
<dbReference type="SMR" id="Q32BQ6"/>
<dbReference type="STRING" id="300267.SDY_3242"/>
<dbReference type="EnsemblBacteria" id="ABB63249">
    <property type="protein sequence ID" value="ABB63249"/>
    <property type="gene ID" value="SDY_3242"/>
</dbReference>
<dbReference type="GeneID" id="93778934"/>
<dbReference type="KEGG" id="sdy:SDY_3242"/>
<dbReference type="PATRIC" id="fig|300267.13.peg.3872"/>
<dbReference type="HOGENOM" id="CLU_081254_0_2_6"/>
<dbReference type="UniPathway" id="UPA00085"/>
<dbReference type="Proteomes" id="UP000002716">
    <property type="component" value="Chromosome"/>
</dbReference>
<dbReference type="GO" id="GO:0005886">
    <property type="term" value="C:plasma membrane"/>
    <property type="evidence" value="ECO:0007669"/>
    <property type="project" value="UniProtKB-SubCell"/>
</dbReference>
<dbReference type="GO" id="GO:0043772">
    <property type="term" value="F:acyl-phosphate glycerol-3-phosphate acyltransferase activity"/>
    <property type="evidence" value="ECO:0007669"/>
    <property type="project" value="InterPro"/>
</dbReference>
<dbReference type="GO" id="GO:0004366">
    <property type="term" value="F:glycerol-3-phosphate O-acyltransferase activity"/>
    <property type="evidence" value="ECO:0007669"/>
    <property type="project" value="UniProtKB-UniRule"/>
</dbReference>
<dbReference type="GO" id="GO:0008654">
    <property type="term" value="P:phospholipid biosynthetic process"/>
    <property type="evidence" value="ECO:0007669"/>
    <property type="project" value="UniProtKB-UniRule"/>
</dbReference>
<dbReference type="HAMAP" id="MF_01043">
    <property type="entry name" value="PlsY"/>
    <property type="match status" value="1"/>
</dbReference>
<dbReference type="InterPro" id="IPR003811">
    <property type="entry name" value="G3P_acylTferase_PlsY"/>
</dbReference>
<dbReference type="NCBIfam" id="TIGR00023">
    <property type="entry name" value="glycerol-3-phosphate 1-O-acyltransferase PlsY"/>
    <property type="match status" value="1"/>
</dbReference>
<dbReference type="PANTHER" id="PTHR30309:SF0">
    <property type="entry name" value="GLYCEROL-3-PHOSPHATE ACYLTRANSFERASE-RELATED"/>
    <property type="match status" value="1"/>
</dbReference>
<dbReference type="PANTHER" id="PTHR30309">
    <property type="entry name" value="INNER MEMBRANE PROTEIN YGIH"/>
    <property type="match status" value="1"/>
</dbReference>
<dbReference type="Pfam" id="PF02660">
    <property type="entry name" value="G3P_acyltransf"/>
    <property type="match status" value="1"/>
</dbReference>
<dbReference type="SMART" id="SM01207">
    <property type="entry name" value="G3P_acyltransf"/>
    <property type="match status" value="1"/>
</dbReference>
<sequence length="205" mass="22193">MSAIAPGMILIAYLCGSISSAILVCRLCGLPDPRTSGSGNPGATNVLRIGGKGAAVAVLIFDVLKGMLPVWGAYELGVSPFWLGLIAIAACLGHIWPVFFGFKGGKGVATAFGAIAPIGWDLTGVMAGTWLLTVLLSGYSSLGAIVSALIAPFYVWWFKPQFTFPVSMLSCLILLRHHDNIQRLWRRQETKIWTKFKRKREKDPE</sequence>
<organism>
    <name type="scientific">Shigella dysenteriae serotype 1 (strain Sd197)</name>
    <dbReference type="NCBI Taxonomy" id="300267"/>
    <lineage>
        <taxon>Bacteria</taxon>
        <taxon>Pseudomonadati</taxon>
        <taxon>Pseudomonadota</taxon>
        <taxon>Gammaproteobacteria</taxon>
        <taxon>Enterobacterales</taxon>
        <taxon>Enterobacteriaceae</taxon>
        <taxon>Shigella</taxon>
    </lineage>
</organism>